<accession>Q8FS11</accession>
<proteinExistence type="inferred from homology"/>
<protein>
    <recommendedName>
        <fullName>Uncharacterized transporter CE0595</fullName>
    </recommendedName>
</protein>
<comment type="subcellular location">
    <subcellularLocation>
        <location evidence="3">Cell membrane</location>
        <topology evidence="3">Multi-pass membrane protein</topology>
    </subcellularLocation>
</comment>
<comment type="similarity">
    <text evidence="3">Belongs to the AAE transporter (TC 2.A.81) family.</text>
</comment>
<reference key="1">
    <citation type="journal article" date="2003" name="Genome Res.">
        <title>Comparative complete genome sequence analysis of the amino acid replacements responsible for the thermostability of Corynebacterium efficiens.</title>
        <authorList>
            <person name="Nishio Y."/>
            <person name="Nakamura Y."/>
            <person name="Kawarabayasi Y."/>
            <person name="Usuda Y."/>
            <person name="Kimura E."/>
            <person name="Sugimoto S."/>
            <person name="Matsui K."/>
            <person name="Yamagishi A."/>
            <person name="Kikuchi H."/>
            <person name="Ikeo K."/>
            <person name="Gojobori T."/>
        </authorList>
    </citation>
    <scope>NUCLEOTIDE SEQUENCE [LARGE SCALE GENOMIC DNA]</scope>
    <source>
        <strain>DSM 44549 / YS-314 / AJ 12310 / JCM 11189 / NBRC 100395</strain>
    </source>
</reference>
<keyword id="KW-1003">Cell membrane</keyword>
<keyword id="KW-0472">Membrane</keyword>
<keyword id="KW-1185">Reference proteome</keyword>
<keyword id="KW-0812">Transmembrane</keyword>
<keyword id="KW-1133">Transmembrane helix</keyword>
<keyword id="KW-0813">Transport</keyword>
<name>Y595_COREF</name>
<feature type="chain" id="PRO_0000208768" description="Uncharacterized transporter CE0595">
    <location>
        <begin position="1"/>
        <end position="530"/>
    </location>
</feature>
<feature type="transmembrane region" description="Helical" evidence="1">
    <location>
        <begin position="4"/>
        <end position="23"/>
    </location>
</feature>
<feature type="transmembrane region" description="Helical" evidence="1">
    <location>
        <begin position="28"/>
        <end position="47"/>
    </location>
</feature>
<feature type="transmembrane region" description="Helical" evidence="1">
    <location>
        <begin position="57"/>
        <end position="79"/>
    </location>
</feature>
<feature type="transmembrane region" description="Helical" evidence="1">
    <location>
        <begin position="91"/>
        <end position="113"/>
    </location>
</feature>
<feature type="transmembrane region" description="Helical" evidence="1">
    <location>
        <begin position="148"/>
        <end position="170"/>
    </location>
</feature>
<feature type="transmembrane region" description="Helical" evidence="1">
    <location>
        <begin position="352"/>
        <end position="374"/>
    </location>
</feature>
<feature type="transmembrane region" description="Helical" evidence="1">
    <location>
        <begin position="379"/>
        <end position="398"/>
    </location>
</feature>
<feature type="transmembrane region" description="Helical" evidence="1">
    <location>
        <begin position="419"/>
        <end position="441"/>
    </location>
</feature>
<feature type="transmembrane region" description="Helical" evidence="1">
    <location>
        <begin position="451"/>
        <end position="473"/>
    </location>
</feature>
<feature type="domain" description="RCK C-terminal" evidence="2">
    <location>
        <begin position="260"/>
        <end position="344"/>
    </location>
</feature>
<gene>
    <name type="ordered locus">CE0595</name>
</gene>
<organism>
    <name type="scientific">Corynebacterium efficiens (strain DSM 44549 / YS-314 / AJ 12310 / JCM 11189 / NBRC 100395)</name>
    <dbReference type="NCBI Taxonomy" id="196164"/>
    <lineage>
        <taxon>Bacteria</taxon>
        <taxon>Bacillati</taxon>
        <taxon>Actinomycetota</taxon>
        <taxon>Actinomycetes</taxon>
        <taxon>Mycobacteriales</taxon>
        <taxon>Corynebacteriaceae</taxon>
        <taxon>Corynebacterium</taxon>
    </lineage>
</organism>
<evidence type="ECO:0000255" key="1"/>
<evidence type="ECO:0000255" key="2">
    <source>
        <dbReference type="PROSITE-ProRule" id="PRU00544"/>
    </source>
</evidence>
<evidence type="ECO:0000305" key="3"/>
<sequence length="530" mass="55367">MLDFLAANPLIALAVILAVGLAIGRISLFGVSLGAAAVLIVALVVSTLNPDIQIPAFVFQLGLAMFVYVIGISAGPAFFREFRSRGWKLTLFMITLLVSLTALAWVLIRAFGLGAGAGAGMFAGSLTSTPGMAAVVALMDPAQAGDPVIGYSLAYPGAVLGSILVAAVGAKLLKVNHTEDAREEGLVTEPLVWKGVRIGEGISGTIGDLPRLSGQQIIATRIVEDPHEHRLADPTLPIKPGMELVINGTVNAVDRAIAALGGECDTKIEDTELVYSRFTVSNPDIVGRTVAELDPVANGFMIARIRQGDTEIVPHRDTVLNYSDRVRVVAAPGRMGEVRRFLGDSEKALGDVNLLPFAIGLSLGLLLGAIPVPLPGDTTMYLGFGGGPIVAGLILGALNRTGPITWQLPFHANRTISTLGLALFLAGVGTSAGAGFRQALTDPQSFVYMGVGFAITVTSALVCAVVGMWLLKLKWDESMGVAAGATTNPAIISYLNDQTGTDLANRGYATVYPTAMIGKILACQVLFLLL</sequence>
<dbReference type="EMBL" id="BA000035">
    <property type="protein sequence ID" value="BAC17405.1"/>
    <property type="molecule type" value="Genomic_DNA"/>
</dbReference>
<dbReference type="RefSeq" id="WP_006769728.1">
    <property type="nucleotide sequence ID" value="NC_004369.1"/>
</dbReference>
<dbReference type="SMR" id="Q8FS11"/>
<dbReference type="STRING" id="196164.gene:10740997"/>
<dbReference type="KEGG" id="cef:CE0595"/>
<dbReference type="eggNOG" id="COG0569">
    <property type="taxonomic scope" value="Bacteria"/>
</dbReference>
<dbReference type="eggNOG" id="COG2985">
    <property type="taxonomic scope" value="Bacteria"/>
</dbReference>
<dbReference type="HOGENOM" id="CLU_035023_3_0_11"/>
<dbReference type="OrthoDB" id="9155749at2"/>
<dbReference type="Proteomes" id="UP000001409">
    <property type="component" value="Chromosome"/>
</dbReference>
<dbReference type="GO" id="GO:0005886">
    <property type="term" value="C:plasma membrane"/>
    <property type="evidence" value="ECO:0007669"/>
    <property type="project" value="UniProtKB-SubCell"/>
</dbReference>
<dbReference type="GO" id="GO:0008324">
    <property type="term" value="F:monoatomic cation transmembrane transporter activity"/>
    <property type="evidence" value="ECO:0007669"/>
    <property type="project" value="InterPro"/>
</dbReference>
<dbReference type="GO" id="GO:0005975">
    <property type="term" value="P:carbohydrate metabolic process"/>
    <property type="evidence" value="ECO:0007669"/>
    <property type="project" value="InterPro"/>
</dbReference>
<dbReference type="GO" id="GO:0006813">
    <property type="term" value="P:potassium ion transport"/>
    <property type="evidence" value="ECO:0007669"/>
    <property type="project" value="InterPro"/>
</dbReference>
<dbReference type="Gene3D" id="3.30.70.1450">
    <property type="entry name" value="Regulator of K+ conductance, C-terminal domain"/>
    <property type="match status" value="1"/>
</dbReference>
<dbReference type="InterPro" id="IPR050144">
    <property type="entry name" value="AAE_transporter"/>
</dbReference>
<dbReference type="InterPro" id="IPR006037">
    <property type="entry name" value="RCK_C"/>
</dbReference>
<dbReference type="InterPro" id="IPR036721">
    <property type="entry name" value="RCK_C_sf"/>
</dbReference>
<dbReference type="InterPro" id="IPR018225">
    <property type="entry name" value="Transaldolase_AS"/>
</dbReference>
<dbReference type="InterPro" id="IPR006512">
    <property type="entry name" value="YidE_YbjL"/>
</dbReference>
<dbReference type="NCBIfam" id="TIGR01625">
    <property type="entry name" value="YidE_YbjL_dupl"/>
    <property type="match status" value="2"/>
</dbReference>
<dbReference type="PANTHER" id="PTHR30445">
    <property type="entry name" value="K(+)_H(+) ANTIPORTER SUBUNIT KHTT"/>
    <property type="match status" value="1"/>
</dbReference>
<dbReference type="PANTHER" id="PTHR30445:SF3">
    <property type="entry name" value="TRANSPORT PROTEIN YIDE-RELATED"/>
    <property type="match status" value="1"/>
</dbReference>
<dbReference type="Pfam" id="PF06826">
    <property type="entry name" value="Asp-Al_Ex"/>
    <property type="match status" value="2"/>
</dbReference>
<dbReference type="Pfam" id="PF02080">
    <property type="entry name" value="TrkA_C"/>
    <property type="match status" value="1"/>
</dbReference>
<dbReference type="SUPFAM" id="SSF116726">
    <property type="entry name" value="TrkA C-terminal domain-like"/>
    <property type="match status" value="1"/>
</dbReference>
<dbReference type="PROSITE" id="PS51202">
    <property type="entry name" value="RCK_C"/>
    <property type="match status" value="1"/>
</dbReference>